<organism>
    <name type="scientific">Arabidopsis thaliana</name>
    <name type="common">Mouse-ear cress</name>
    <dbReference type="NCBI Taxonomy" id="3702"/>
    <lineage>
        <taxon>Eukaryota</taxon>
        <taxon>Viridiplantae</taxon>
        <taxon>Streptophyta</taxon>
        <taxon>Embryophyta</taxon>
        <taxon>Tracheophyta</taxon>
        <taxon>Spermatophyta</taxon>
        <taxon>Magnoliopsida</taxon>
        <taxon>eudicotyledons</taxon>
        <taxon>Gunneridae</taxon>
        <taxon>Pentapetalae</taxon>
        <taxon>rosids</taxon>
        <taxon>malvids</taxon>
        <taxon>Brassicales</taxon>
        <taxon>Brassicaceae</taxon>
        <taxon>Camelineae</taxon>
        <taxon>Arabidopsis</taxon>
    </lineage>
</organism>
<evidence type="ECO:0000255" key="1">
    <source>
        <dbReference type="PROSITE-ProRule" id="PRU00353"/>
    </source>
</evidence>
<evidence type="ECO:0000269" key="2">
    <source>
    </source>
</evidence>
<evidence type="ECO:0000269" key="3">
    <source>
    </source>
</evidence>
<evidence type="ECO:0000269" key="4">
    <source>
    </source>
</evidence>
<evidence type="ECO:0000305" key="5"/>
<comment type="function">
    <text evidence="2 3 4">Transcription activator of genes involved in biosynthesis of secondary walls. Together with NST2 and NST3, required for the secondary cell wall thickening of sclerenchymatous fibers, secondary xylem (tracheary elements), and of the anther endocethium, which is necessary for anther dehiscence. May also regulate the secondary cell wall lignification of other tissues.</text>
</comment>
<comment type="subcellular location">
    <subcellularLocation>
        <location evidence="5">Nucleus</location>
    </subcellularLocation>
</comment>
<comment type="tissue specificity">
    <text evidence="2 3">Expressed in various aboveground tissues undergoing thickening of the lignified secondary wall such as anthers, filaments of stamens, the base of carpels, styles, the boundaries between siliques and pedicels, the midrib of leaf veins, and inflorescence stems, specifically in interfascicular fibers (sclerenchyma), cells differentiating into vascular vessels, and xylary fibers (secondary xylem).</text>
</comment>
<comment type="domain">
    <text>The NAC domain includes a DNA-binding domain and a dimerization domain.</text>
</comment>
<comment type="sequence caution" evidence="5">
    <conflict type="erroneous gene model prediction">
        <sequence resource="EMBL-CDS" id="AAC33506"/>
    </conflict>
</comment>
<accession>Q84WP6</accession>
<accession>O81033</accession>
<accession>Q5M735</accession>
<gene>
    <name type="primary">NAC043</name>
    <name type="synonym">EMB2301</name>
    <name type="synonym">NST1</name>
    <name type="ordered locus">At2g46770</name>
    <name type="ORF">F19D11.5</name>
</gene>
<keyword id="KW-0238">DNA-binding</keyword>
<keyword id="KW-0539">Nucleus</keyword>
<keyword id="KW-1185">Reference proteome</keyword>
<keyword id="KW-0804">Transcription</keyword>
<keyword id="KW-0805">Transcription regulation</keyword>
<sequence>MMSKSMSISVNGQSQVPPGFRFHPTEEELLQYYLRKKVNSIEIDLDVIRDVDLNKLEPWDIQEMCKIGTTPQNDWYFFSHKDKKYPTGTRTNRATAAGFWKATGRDKIIYSNGRRIGMRKTLVFYKGRAPHGQKSDWIMHEYRLDDNIISPEDVTVHEVVSIIGEASQDEGWVVCRIFKKKNLHKTLNSPVGGASLSGGGDTPKTTSSQIFNEDTLDQFLELMGRSCKEELNLDPFMKLPNLESPNSQAINNCHVSSPDTNHNIHVSNVVDTSFVTSWAALDRLVASQLNGPTSYSITAVNESHVGHDHLALPSVRSPYPSLNRSASYHAGLTQEYTPEMELWNTTTSSLSSSPGPFCHVSNGSG</sequence>
<dbReference type="EMBL" id="AC005310">
    <property type="protein sequence ID" value="AAC33506.1"/>
    <property type="status" value="ALT_SEQ"/>
    <property type="molecule type" value="Genomic_DNA"/>
</dbReference>
<dbReference type="EMBL" id="CP002685">
    <property type="protein sequence ID" value="AEC10750.1"/>
    <property type="molecule type" value="Genomic_DNA"/>
</dbReference>
<dbReference type="EMBL" id="BT002931">
    <property type="protein sequence ID" value="AAO22745.1"/>
    <property type="molecule type" value="mRNA"/>
</dbReference>
<dbReference type="EMBL" id="BT020413">
    <property type="protein sequence ID" value="AAV97804.1"/>
    <property type="molecule type" value="mRNA"/>
</dbReference>
<dbReference type="PIR" id="T02678">
    <property type="entry name" value="T02678"/>
</dbReference>
<dbReference type="RefSeq" id="NP_182200.2">
    <property type="nucleotide sequence ID" value="NM_130243.3"/>
</dbReference>
<dbReference type="SMR" id="Q84WP6"/>
<dbReference type="BioGRID" id="4625">
    <property type="interactions" value="43"/>
</dbReference>
<dbReference type="FunCoup" id="Q84WP6">
    <property type="interactions" value="1"/>
</dbReference>
<dbReference type="IntAct" id="Q84WP6">
    <property type="interactions" value="42"/>
</dbReference>
<dbReference type="STRING" id="3702.Q84WP6"/>
<dbReference type="iPTMnet" id="Q84WP6"/>
<dbReference type="PaxDb" id="3702-AT2G46770.1"/>
<dbReference type="ProteomicsDB" id="251015"/>
<dbReference type="EnsemblPlants" id="AT2G46770.1">
    <property type="protein sequence ID" value="AT2G46770.1"/>
    <property type="gene ID" value="AT2G46770"/>
</dbReference>
<dbReference type="GeneID" id="819290"/>
<dbReference type="Gramene" id="AT2G46770.1">
    <property type="protein sequence ID" value="AT2G46770.1"/>
    <property type="gene ID" value="AT2G46770"/>
</dbReference>
<dbReference type="KEGG" id="ath:AT2G46770"/>
<dbReference type="Araport" id="AT2G46770"/>
<dbReference type="TAIR" id="AT2G46770">
    <property type="gene designation" value="NST1"/>
</dbReference>
<dbReference type="eggNOG" id="ENOG502QSBA">
    <property type="taxonomic scope" value="Eukaryota"/>
</dbReference>
<dbReference type="HOGENOM" id="CLU_035664_1_1_1"/>
<dbReference type="InParanoid" id="Q84WP6"/>
<dbReference type="OMA" id="SNMAFCS"/>
<dbReference type="PhylomeDB" id="Q84WP6"/>
<dbReference type="PRO" id="PR:Q84WP6"/>
<dbReference type="Proteomes" id="UP000006548">
    <property type="component" value="Chromosome 2"/>
</dbReference>
<dbReference type="ExpressionAtlas" id="Q84WP6">
    <property type="expression patterns" value="baseline and differential"/>
</dbReference>
<dbReference type="GO" id="GO:0005634">
    <property type="term" value="C:nucleus"/>
    <property type="evidence" value="ECO:0007669"/>
    <property type="project" value="UniProtKB-SubCell"/>
</dbReference>
<dbReference type="GO" id="GO:0003677">
    <property type="term" value="F:DNA binding"/>
    <property type="evidence" value="ECO:0007669"/>
    <property type="project" value="UniProtKB-KW"/>
</dbReference>
<dbReference type="GO" id="GO:0003700">
    <property type="term" value="F:DNA-binding transcription factor activity"/>
    <property type="evidence" value="ECO:0000250"/>
    <property type="project" value="TAIR"/>
</dbReference>
<dbReference type="GO" id="GO:0010047">
    <property type="term" value="P:fruit dehiscence"/>
    <property type="evidence" value="ECO:0000315"/>
    <property type="project" value="TAIR"/>
</dbReference>
<dbReference type="GO" id="GO:0009834">
    <property type="term" value="P:plant-type secondary cell wall biogenesis"/>
    <property type="evidence" value="ECO:0000314"/>
    <property type="project" value="TAIR"/>
</dbReference>
<dbReference type="GO" id="GO:0045893">
    <property type="term" value="P:positive regulation of DNA-templated transcription"/>
    <property type="evidence" value="ECO:0000314"/>
    <property type="project" value="TAIR"/>
</dbReference>
<dbReference type="FunFam" id="2.170.150.80:FF:000003">
    <property type="entry name" value="NAC domain-containing protein"/>
    <property type="match status" value="1"/>
</dbReference>
<dbReference type="Gene3D" id="2.170.150.80">
    <property type="entry name" value="NAC domain"/>
    <property type="match status" value="1"/>
</dbReference>
<dbReference type="InterPro" id="IPR003441">
    <property type="entry name" value="NAC-dom"/>
</dbReference>
<dbReference type="InterPro" id="IPR036093">
    <property type="entry name" value="NAC_dom_sf"/>
</dbReference>
<dbReference type="PANTHER" id="PTHR31744:SF221">
    <property type="entry name" value="NAC DOMAIN-CONTAINING PROTEIN 43-LIKE"/>
    <property type="match status" value="1"/>
</dbReference>
<dbReference type="PANTHER" id="PTHR31744">
    <property type="entry name" value="PROTEIN CUP-SHAPED COTYLEDON 2-RELATED"/>
    <property type="match status" value="1"/>
</dbReference>
<dbReference type="Pfam" id="PF02365">
    <property type="entry name" value="NAM"/>
    <property type="match status" value="1"/>
</dbReference>
<dbReference type="SUPFAM" id="SSF101941">
    <property type="entry name" value="NAC domain"/>
    <property type="match status" value="1"/>
</dbReference>
<dbReference type="PROSITE" id="PS51005">
    <property type="entry name" value="NAC"/>
    <property type="match status" value="1"/>
</dbReference>
<proteinExistence type="evidence at transcript level"/>
<name>NAC43_ARATH</name>
<feature type="chain" id="PRO_0000234356" description="NAC domain-containing protein 43">
    <location>
        <begin position="1"/>
        <end position="365"/>
    </location>
</feature>
<feature type="domain" description="NAC" evidence="1">
    <location>
        <begin position="16"/>
        <end position="180"/>
    </location>
</feature>
<feature type="DNA-binding region" evidence="1">
    <location>
        <begin position="116"/>
        <end position="186"/>
    </location>
</feature>
<feature type="sequence conflict" description="In Ref. 3; AAO22745." evidence="5" ref="3">
    <original>P</original>
    <variation>H</variation>
    <location>
        <position position="292"/>
    </location>
</feature>
<protein>
    <recommendedName>
        <fullName>NAC domain-containing protein 43</fullName>
        <shortName>ANAC043</shortName>
    </recommendedName>
    <alternativeName>
        <fullName>Protein EMBRYO DEFECTIVE 2301</fullName>
    </alternativeName>
    <alternativeName>
        <fullName>Protein NAC SECONDARY WALL THICKENING PROMOTING FACTOR 1</fullName>
    </alternativeName>
</protein>
<reference key="1">
    <citation type="journal article" date="1999" name="Nature">
        <title>Sequence and analysis of chromosome 2 of the plant Arabidopsis thaliana.</title>
        <authorList>
            <person name="Lin X."/>
            <person name="Kaul S."/>
            <person name="Rounsley S.D."/>
            <person name="Shea T.P."/>
            <person name="Benito M.-I."/>
            <person name="Town C.D."/>
            <person name="Fujii C.Y."/>
            <person name="Mason T.M."/>
            <person name="Bowman C.L."/>
            <person name="Barnstead M.E."/>
            <person name="Feldblyum T.V."/>
            <person name="Buell C.R."/>
            <person name="Ketchum K.A."/>
            <person name="Lee J.J."/>
            <person name="Ronning C.M."/>
            <person name="Koo H.L."/>
            <person name="Moffat K.S."/>
            <person name="Cronin L.A."/>
            <person name="Shen M."/>
            <person name="Pai G."/>
            <person name="Van Aken S."/>
            <person name="Umayam L."/>
            <person name="Tallon L.J."/>
            <person name="Gill J.E."/>
            <person name="Adams M.D."/>
            <person name="Carrera A.J."/>
            <person name="Creasy T.H."/>
            <person name="Goodman H.M."/>
            <person name="Somerville C.R."/>
            <person name="Copenhaver G.P."/>
            <person name="Preuss D."/>
            <person name="Nierman W.C."/>
            <person name="White O."/>
            <person name="Eisen J.A."/>
            <person name="Salzberg S.L."/>
            <person name="Fraser C.M."/>
            <person name="Venter J.C."/>
        </authorList>
    </citation>
    <scope>NUCLEOTIDE SEQUENCE [LARGE SCALE GENOMIC DNA]</scope>
    <source>
        <strain>cv. Columbia</strain>
    </source>
</reference>
<reference key="2">
    <citation type="journal article" date="2017" name="Plant J.">
        <title>Araport11: a complete reannotation of the Arabidopsis thaliana reference genome.</title>
        <authorList>
            <person name="Cheng C.Y."/>
            <person name="Krishnakumar V."/>
            <person name="Chan A.P."/>
            <person name="Thibaud-Nissen F."/>
            <person name="Schobel S."/>
            <person name="Town C.D."/>
        </authorList>
    </citation>
    <scope>GENOME REANNOTATION</scope>
    <source>
        <strain>cv. Columbia</strain>
    </source>
</reference>
<reference key="3">
    <citation type="journal article" date="2003" name="Science">
        <title>Empirical analysis of transcriptional activity in the Arabidopsis genome.</title>
        <authorList>
            <person name="Yamada K."/>
            <person name="Lim J."/>
            <person name="Dale J.M."/>
            <person name="Chen H."/>
            <person name="Shinn P."/>
            <person name="Palm C.J."/>
            <person name="Southwick A.M."/>
            <person name="Wu H.C."/>
            <person name="Kim C.J."/>
            <person name="Nguyen M."/>
            <person name="Pham P.K."/>
            <person name="Cheuk R.F."/>
            <person name="Karlin-Newmann G."/>
            <person name="Liu S.X."/>
            <person name="Lam B."/>
            <person name="Sakano H."/>
            <person name="Wu T."/>
            <person name="Yu G."/>
            <person name="Miranda M."/>
            <person name="Quach H.L."/>
            <person name="Tripp M."/>
            <person name="Chang C.H."/>
            <person name="Lee J.M."/>
            <person name="Toriumi M.J."/>
            <person name="Chan M.M."/>
            <person name="Tang C.C."/>
            <person name="Onodera C.S."/>
            <person name="Deng J.M."/>
            <person name="Akiyama K."/>
            <person name="Ansari Y."/>
            <person name="Arakawa T."/>
            <person name="Banh J."/>
            <person name="Banno F."/>
            <person name="Bowser L."/>
            <person name="Brooks S.Y."/>
            <person name="Carninci P."/>
            <person name="Chao Q."/>
            <person name="Choy N."/>
            <person name="Enju A."/>
            <person name="Goldsmith A.D."/>
            <person name="Gurjal M."/>
            <person name="Hansen N.F."/>
            <person name="Hayashizaki Y."/>
            <person name="Johnson-Hopson C."/>
            <person name="Hsuan V.W."/>
            <person name="Iida K."/>
            <person name="Karnes M."/>
            <person name="Khan S."/>
            <person name="Koesema E."/>
            <person name="Ishida J."/>
            <person name="Jiang P.X."/>
            <person name="Jones T."/>
            <person name="Kawai J."/>
            <person name="Kamiya A."/>
            <person name="Meyers C."/>
            <person name="Nakajima M."/>
            <person name="Narusaka M."/>
            <person name="Seki M."/>
            <person name="Sakurai T."/>
            <person name="Satou M."/>
            <person name="Tamse R."/>
            <person name="Vaysberg M."/>
            <person name="Wallender E.K."/>
            <person name="Wong C."/>
            <person name="Yamamura Y."/>
            <person name="Yuan S."/>
            <person name="Shinozaki K."/>
            <person name="Davis R.W."/>
            <person name="Theologis A."/>
            <person name="Ecker J.R."/>
        </authorList>
    </citation>
    <scope>NUCLEOTIDE SEQUENCE [LARGE SCALE MRNA]</scope>
    <source>
        <strain>cv. Columbia</strain>
    </source>
</reference>
<reference key="4">
    <citation type="submission" date="2004-12" db="EMBL/GenBank/DDBJ databases">
        <title>Arabidopsis ORF clones.</title>
        <authorList>
            <person name="Shinn P."/>
            <person name="Chen H."/>
            <person name="Cheuk R.F."/>
            <person name="Kim C.J."/>
            <person name="Ecker J.R."/>
        </authorList>
    </citation>
    <scope>NUCLEOTIDE SEQUENCE [LARGE SCALE MRNA]</scope>
    <source>
        <strain>cv. Columbia</strain>
    </source>
</reference>
<reference key="5">
    <citation type="journal article" date="2003" name="DNA Res.">
        <title>Comprehensive analysis of NAC family genes in Oryza sativa and Arabidopsis thaliana.</title>
        <authorList>
            <person name="Ooka H."/>
            <person name="Satoh K."/>
            <person name="Doi K."/>
            <person name="Nagata T."/>
            <person name="Otomo Y."/>
            <person name="Murakami K."/>
            <person name="Matsubara K."/>
            <person name="Osato N."/>
            <person name="Kawai J."/>
            <person name="Carninci P."/>
            <person name="Hayashizaki Y."/>
            <person name="Suzuki K."/>
            <person name="Kojima K."/>
            <person name="Takahara Y."/>
            <person name="Yamamoto K."/>
            <person name="Kikuchi S."/>
        </authorList>
    </citation>
    <scope>GENE FAMILY</scope>
    <scope>NOMENCLATURE</scope>
</reference>
<reference key="6">
    <citation type="journal article" date="2005" name="Plant Cell">
        <title>The NAC transcription factors NST1 and NST2 of Arabidopsis regulate secondary wall thickenings and are required for anther dehiscence.</title>
        <authorList>
            <person name="Mitsuda N."/>
            <person name="Seki M."/>
            <person name="Shinozaki K."/>
            <person name="Ohme-Takagi M."/>
        </authorList>
    </citation>
    <scope>FUNCTION</scope>
    <scope>TISSUE SPECIFICITY</scope>
</reference>
<reference key="7">
    <citation type="journal article" date="2007" name="Plant Cell">
        <title>NAC transcription factors, NST1 and NST3, are key regulators of the formation of secondary walls in woody tissues of Arabidopsis.</title>
        <authorList>
            <person name="Mitsuda N."/>
            <person name="Iwase A."/>
            <person name="Yamamoto H."/>
            <person name="Yoshida M."/>
            <person name="Seki M."/>
            <person name="Shinozaki K."/>
            <person name="Ohme-Takagi M."/>
        </authorList>
    </citation>
    <scope>FUNCTION</scope>
    <scope>TISSUE SPECIFICITY</scope>
</reference>
<reference key="8">
    <citation type="journal article" date="2007" name="Planta">
        <title>Two NAC domain transcription factors, SND1 and NST1, function redundantly in regulation of secondary wall synthesis in fibers of Arabidopsis.</title>
        <authorList>
            <person name="Zhong R."/>
            <person name="Richardson E.A."/>
            <person name="Ye Z.-H."/>
        </authorList>
    </citation>
    <scope>FUNCTION</scope>
</reference>